<protein>
    <recommendedName>
        <fullName evidence="3">Small ribosomal subunit protein uS13</fullName>
    </recommendedName>
    <alternativeName>
        <fullName>40S ribosomal protein S18</fullName>
    </alternativeName>
</protein>
<name>RS18_ENTH1</name>
<keyword id="KW-0963">Cytoplasm</keyword>
<keyword id="KW-1185">Reference proteome</keyword>
<keyword id="KW-0687">Ribonucleoprotein</keyword>
<keyword id="KW-0689">Ribosomal protein</keyword>
<keyword id="KW-0694">RNA-binding</keyword>
<keyword id="KW-0699">rRNA-binding</keyword>
<sequence>MATVTSESEFQHMLRVCNTNLDGRRKVPYALTGIKGCGRRYAYLVCKRAGIDVNKRAGLMTPAEIEKIVDILNNPLNYKIPVWFLNRQKDNKDGKDSQLIANAVETRLREDIEALKKMRAHRGLRHYWGLRVRGQHTKTTGRRGRTVGVSRTKGA</sequence>
<comment type="function">
    <text evidence="1">Component of the small ribosomal subunit. The ribosome is a large ribonucleoprotein complex responsible for the synthesis of proteins in the cell.</text>
</comment>
<comment type="subunit">
    <text evidence="1">Component of the small ribosomal subunit.</text>
</comment>
<comment type="subcellular location">
    <subcellularLocation>
        <location evidence="1">Cytoplasm</location>
    </subcellularLocation>
</comment>
<comment type="similarity">
    <text evidence="3">Belongs to the universal ribosomal protein uS13 family.</text>
</comment>
<organism evidence="5">
    <name type="scientific">Entamoeba histolytica (strain ATCC 30459 / HM-1:IMSS / ABRM)</name>
    <dbReference type="NCBI Taxonomy" id="294381"/>
    <lineage>
        <taxon>Eukaryota</taxon>
        <taxon>Amoebozoa</taxon>
        <taxon>Evosea</taxon>
        <taxon>Archamoebae</taxon>
        <taxon>Mastigamoebida</taxon>
        <taxon>Entamoebidae</taxon>
        <taxon>Entamoeba</taxon>
    </lineage>
</organism>
<reference evidence="4" key="1">
    <citation type="journal article" date="1998" name="DNA Seq.">
        <title>The cloning and sequencing of ribosomal protein S18 of parasitic protozoa, Entamoeba histolytica.</title>
        <authorList>
            <person name="Tanaka T."/>
            <person name="Tanaka M."/>
            <person name="Mitsui Y."/>
        </authorList>
    </citation>
    <scope>NUCLEOTIDE SEQUENCE [MRNA]</scope>
    <source>
        <strain evidence="4">ATCC 30459 / HM-1:IMSS / ABRM</strain>
    </source>
</reference>
<reference evidence="5" key="2">
    <citation type="journal article" date="2005" name="Nature">
        <title>The genome of the protist parasite Entamoeba histolytica.</title>
        <authorList>
            <person name="Loftus B.J."/>
            <person name="Anderson I."/>
            <person name="Davies R."/>
            <person name="Alsmark U.C."/>
            <person name="Samuelson J."/>
            <person name="Amedeo P."/>
            <person name="Roncaglia P."/>
            <person name="Berriman M."/>
            <person name="Hirt R.P."/>
            <person name="Mann B.J."/>
            <person name="Nozaki T."/>
            <person name="Suh B."/>
            <person name="Pop M."/>
            <person name="Duchene M."/>
            <person name="Ackers J."/>
            <person name="Tannich E."/>
            <person name="Leippe M."/>
            <person name="Hofer M."/>
            <person name="Bruchhaus I."/>
            <person name="Willhoeft U."/>
            <person name="Bhattacharya A."/>
            <person name="Chillingworth T."/>
            <person name="Churcher C.M."/>
            <person name="Hance Z."/>
            <person name="Harris B."/>
            <person name="Harris D."/>
            <person name="Jagels K."/>
            <person name="Moule S."/>
            <person name="Mungall K.L."/>
            <person name="Ormond D."/>
            <person name="Squares R."/>
            <person name="Whitehead S."/>
            <person name="Quail M.A."/>
            <person name="Rabbinowitsch E."/>
            <person name="Norbertczak H."/>
            <person name="Price C."/>
            <person name="Wang Z."/>
            <person name="Guillen N."/>
            <person name="Gilchrist C."/>
            <person name="Stroup S.E."/>
            <person name="Bhattacharya S."/>
            <person name="Lohia A."/>
            <person name="Foster P.G."/>
            <person name="Sicheritz-Ponten T."/>
            <person name="Weber C."/>
            <person name="Singh U."/>
            <person name="Mukherjee C."/>
            <person name="El-Sayed N.M.A."/>
            <person name="Petri W.A."/>
            <person name="Clark C.G."/>
            <person name="Embley T.M."/>
            <person name="Barrell B.G."/>
            <person name="Fraser C.M."/>
            <person name="Hall N."/>
        </authorList>
    </citation>
    <scope>NUCLEOTIDE SEQUENCE [LARGE SCALE GENOMIC DNA]</scope>
    <source>
        <strain evidence="5">ATCC 30459 / HM-1:IMSS / ABRM</strain>
    </source>
</reference>
<dbReference type="EMBL" id="L34567">
    <property type="protein sequence ID" value="AAD09140.1"/>
    <property type="molecule type" value="mRNA"/>
</dbReference>
<dbReference type="EMBL" id="DS571184">
    <property type="protein sequence ID" value="EAL48712.2"/>
    <property type="molecule type" value="Genomic_DNA"/>
</dbReference>
<dbReference type="RefSeq" id="XP_653090.2">
    <property type="nucleotide sequence ID" value="XM_647998.2"/>
</dbReference>
<dbReference type="RefSeq" id="XP_654098.2">
    <property type="nucleotide sequence ID" value="XM_649006.2"/>
</dbReference>
<dbReference type="SMR" id="P48151"/>
<dbReference type="GeneID" id="3408404"/>
<dbReference type="KEGG" id="ehi:EHI_009680"/>
<dbReference type="KEGG" id="ehi:EHI_031400"/>
<dbReference type="VEuPathDB" id="AmoebaDB:EHI5A_146380"/>
<dbReference type="VEuPathDB" id="AmoebaDB:EHI7A_095010"/>
<dbReference type="VEuPathDB" id="AmoebaDB:EHI8A_005180"/>
<dbReference type="VEuPathDB" id="AmoebaDB:EHI_009680"/>
<dbReference type="VEuPathDB" id="AmoebaDB:KM1_171150"/>
<dbReference type="eggNOG" id="KOG3311">
    <property type="taxonomic scope" value="Eukaryota"/>
</dbReference>
<dbReference type="HOGENOM" id="CLU_103849_0_1_1"/>
<dbReference type="OMA" id="RKTRCER"/>
<dbReference type="OrthoDB" id="1702480at2759"/>
<dbReference type="Proteomes" id="UP000001926">
    <property type="component" value="Partially assembled WGS sequence"/>
</dbReference>
<dbReference type="GO" id="GO:0005829">
    <property type="term" value="C:cytosol"/>
    <property type="evidence" value="ECO:0000318"/>
    <property type="project" value="GO_Central"/>
</dbReference>
<dbReference type="GO" id="GO:0015935">
    <property type="term" value="C:small ribosomal subunit"/>
    <property type="evidence" value="ECO:0000318"/>
    <property type="project" value="GO_Central"/>
</dbReference>
<dbReference type="GO" id="GO:0019843">
    <property type="term" value="F:rRNA binding"/>
    <property type="evidence" value="ECO:0007669"/>
    <property type="project" value="UniProtKB-KW"/>
</dbReference>
<dbReference type="GO" id="GO:0003735">
    <property type="term" value="F:structural constituent of ribosome"/>
    <property type="evidence" value="ECO:0007669"/>
    <property type="project" value="InterPro"/>
</dbReference>
<dbReference type="GO" id="GO:0006412">
    <property type="term" value="P:translation"/>
    <property type="evidence" value="ECO:0007669"/>
    <property type="project" value="InterPro"/>
</dbReference>
<dbReference type="FunFam" id="4.10.910.10:FF:000002">
    <property type="entry name" value="40S ribosomal protein S18"/>
    <property type="match status" value="1"/>
</dbReference>
<dbReference type="FunFam" id="1.10.8.50:FF:000018">
    <property type="entry name" value="40S ribosomal protein S18, putative"/>
    <property type="match status" value="1"/>
</dbReference>
<dbReference type="Gene3D" id="1.10.8.50">
    <property type="match status" value="1"/>
</dbReference>
<dbReference type="Gene3D" id="4.10.910.10">
    <property type="entry name" value="30s ribosomal protein s13, domain 2"/>
    <property type="match status" value="1"/>
</dbReference>
<dbReference type="HAMAP" id="MF_01315">
    <property type="entry name" value="Ribosomal_uS13"/>
    <property type="match status" value="1"/>
</dbReference>
<dbReference type="InterPro" id="IPR027437">
    <property type="entry name" value="Rbsml_uS13_C"/>
</dbReference>
<dbReference type="InterPro" id="IPR001892">
    <property type="entry name" value="Ribosomal_uS13"/>
</dbReference>
<dbReference type="InterPro" id="IPR010979">
    <property type="entry name" value="Ribosomal_uS13-like_H2TH"/>
</dbReference>
<dbReference type="InterPro" id="IPR018269">
    <property type="entry name" value="Ribosomal_uS13_CS"/>
</dbReference>
<dbReference type="NCBIfam" id="NF003140">
    <property type="entry name" value="PRK04053.1"/>
    <property type="match status" value="1"/>
</dbReference>
<dbReference type="PANTHER" id="PTHR10871">
    <property type="entry name" value="30S RIBOSOMAL PROTEIN S13/40S RIBOSOMAL PROTEIN S18"/>
    <property type="match status" value="1"/>
</dbReference>
<dbReference type="PANTHER" id="PTHR10871:SF3">
    <property type="entry name" value="SMALL RIBOSOMAL SUBUNIT PROTEIN US13"/>
    <property type="match status" value="1"/>
</dbReference>
<dbReference type="Pfam" id="PF00416">
    <property type="entry name" value="Ribosomal_S13"/>
    <property type="match status" value="1"/>
</dbReference>
<dbReference type="PIRSF" id="PIRSF002134">
    <property type="entry name" value="Ribosomal_S13"/>
    <property type="match status" value="1"/>
</dbReference>
<dbReference type="SUPFAM" id="SSF46946">
    <property type="entry name" value="S13-like H2TH domain"/>
    <property type="match status" value="1"/>
</dbReference>
<dbReference type="PROSITE" id="PS00646">
    <property type="entry name" value="RIBOSOMAL_S13_1"/>
    <property type="match status" value="1"/>
</dbReference>
<dbReference type="PROSITE" id="PS50159">
    <property type="entry name" value="RIBOSOMAL_S13_2"/>
    <property type="match status" value="1"/>
</dbReference>
<gene>
    <name type="primary">RPS18</name>
    <name evidence="5" type="ORF">EHI_009680</name>
</gene>
<evidence type="ECO:0000250" key="1">
    <source>
        <dbReference type="UniProtKB" id="P0CX55"/>
    </source>
</evidence>
<evidence type="ECO:0000256" key="2">
    <source>
        <dbReference type="SAM" id="MobiDB-lite"/>
    </source>
</evidence>
<evidence type="ECO:0000305" key="3"/>
<evidence type="ECO:0000312" key="4">
    <source>
        <dbReference type="EMBL" id="AAD09140.1"/>
    </source>
</evidence>
<evidence type="ECO:0000312" key="5">
    <source>
        <dbReference type="EMBL" id="EAL48712.2"/>
    </source>
</evidence>
<accession>P48151</accession>
<proteinExistence type="evidence at transcript level"/>
<feature type="chain" id="PRO_0000132223" description="Small ribosomal subunit protein uS13">
    <location>
        <begin position="1"/>
        <end position="155"/>
    </location>
</feature>
<feature type="region of interest" description="Disordered" evidence="2">
    <location>
        <begin position="135"/>
        <end position="155"/>
    </location>
</feature>
<feature type="compositionally biased region" description="Basic residues" evidence="2">
    <location>
        <begin position="135"/>
        <end position="145"/>
    </location>
</feature>
<feature type="compositionally biased region" description="Low complexity" evidence="2">
    <location>
        <begin position="146"/>
        <end position="155"/>
    </location>
</feature>
<feature type="sequence conflict" description="In Ref. 1; AAD09140." evidence="3" ref="1">
    <original>NNP</original>
    <variation>TTQ</variation>
    <location>
        <begin position="73"/>
        <end position="75"/>
    </location>
</feature>
<feature type="sequence conflict" description="In Ref. 1; AAD09140." evidence="3" ref="1">
    <original>H</original>
    <variation>N</variation>
    <location>
        <position position="136"/>
    </location>
</feature>
<feature type="sequence conflict" description="In Ref. 1; AAD09140." evidence="3" ref="1">
    <original>G</original>
    <variation>R</variation>
    <location>
        <position position="154"/>
    </location>
</feature>